<organism>
    <name type="scientific">Human herpesvirus 7 (strain JI)</name>
    <name type="common">HHV-7</name>
    <name type="synonym">Human T lymphotropic virus</name>
    <dbReference type="NCBI Taxonomy" id="57278"/>
    <lineage>
        <taxon>Viruses</taxon>
        <taxon>Duplodnaviria</taxon>
        <taxon>Heunggongvirae</taxon>
        <taxon>Peploviricota</taxon>
        <taxon>Herviviricetes</taxon>
        <taxon>Herpesvirales</taxon>
        <taxon>Orthoherpesviridae</taxon>
        <taxon>Betaherpesvirinae</taxon>
        <taxon>Roseolovirus</taxon>
        <taxon>Roseolovirus humanbeta7</taxon>
        <taxon>Human betaherpesvirus 7</taxon>
    </lineage>
</organism>
<gene>
    <name evidence="1" type="primary">HELI</name>
    <name type="ordered locus">U77</name>
</gene>
<accession>P52357</accession>
<evidence type="ECO:0000255" key="1">
    <source>
        <dbReference type="HAMAP-Rule" id="MF_04030"/>
    </source>
</evidence>
<comment type="function">
    <text evidence="1">Component of the helicase/primase complex. Unwinds the DNA at the replication forks and generates single-stranded DNA for both leading and lagging strand synthesis. The primase synthesizes short RNA primers on the lagging strand that the polymerase elongates using dNTPs. Possesses helicase-like motifs and therefore may act as the helicase subunit of the complex.</text>
</comment>
<comment type="subunit">
    <text evidence="1">Associates with the primase and the primase-associated factor to form the helicase-primase complex.</text>
</comment>
<comment type="subcellular location">
    <subcellularLocation>
        <location evidence="1">Host nucleus</location>
    </subcellularLocation>
</comment>
<comment type="similarity">
    <text evidence="1">Belongs to the herpesviridae helicase family.</text>
</comment>
<sequence>MSLSSLFNGKYDTKFLLNMSSAAKVELIVEKVAALADACLETPLPTDWFRNILDPELEFNSNFEEIHSIGDEEFAQPLPFLPFRVLLITGTAGAGKTSSIQTLAANSDCLITATTSIAAQNLSGLLNRTKSAQVKTIFKTFGFNSSHVSMNERISCSVTTLDSIADQQKHDLSTYWNVIADIAERALNAANGKTKVIPDLCESSVIVIDEAGVILRHILHTVVFFYWFYNGLHKTQLYKNRVIPCIVCVGSPTQSGALISSFNPLTQNKDVKKGFDILSALICDDILSNYCKISENWVIFVNNKRCTDVEFGEFLKHIEFGLPLKPELIEYVDRFVRPATYIRNPTNEIGMTRLFLSHYEVKSYFKVLHEQVELTNKDNLFTFPVYFIIQNKAFEDYKNEISNFTLEIEPWFKTNLHRLNTYSQFADQDLSKTIQIEEIVLDDGSVEETLITCHLKHIKHSSIGVTSRTKSSTVGFSGTYEKFVELLQSDLFIEKTACEYSVHAYSFLTGLMYGGMYSFCLSEFTTSEVMTEIRKIKLPNIDFLQTMTAEVSLQTFDESDEYYDLHIAPTDEEMLASDPCPDPFFLKYKQLPLTNVLTFEEISYLYTVFKEIFISRFAILQRHSKEMFGKSNLITYNRNNVSSKRCGEICSHVKSFYGMLTYAVPANNYTLEGYTYDNVIFLGTDKMLPPIIYKRGLPKIVIKDEMGFISILDNNVSKLTDTVNGNSFHICTTIDYAIVSKVAMTVTKSQGLSIQRVALDFGNDPKNLKLSSIYVGMSRVVDPNNLIMNLNPLRLNYENDNIIASHIVKALKNKDTMLIF</sequence>
<feature type="chain" id="PRO_0000115851" description="DNA replication helicase">
    <location>
        <begin position="1"/>
        <end position="820"/>
    </location>
</feature>
<feature type="binding site" evidence="1">
    <location>
        <begin position="90"/>
        <end position="97"/>
    </location>
    <ligand>
        <name>ATP</name>
        <dbReference type="ChEBI" id="CHEBI:30616"/>
    </ligand>
</feature>
<protein>
    <recommendedName>
        <fullName evidence="1">DNA replication helicase</fullName>
        <ecNumber evidence="1">3.6.4.-</ecNumber>
    </recommendedName>
</protein>
<dbReference type="EC" id="3.6.4.-" evidence="1"/>
<dbReference type="EMBL" id="U43400">
    <property type="protein sequence ID" value="AAC54738.1"/>
    <property type="molecule type" value="Genomic_DNA"/>
</dbReference>
<dbReference type="PIR" id="T41978">
    <property type="entry name" value="T41978"/>
</dbReference>
<dbReference type="Proteomes" id="UP000009246">
    <property type="component" value="Segment"/>
</dbReference>
<dbReference type="GO" id="GO:0042025">
    <property type="term" value="C:host cell nucleus"/>
    <property type="evidence" value="ECO:0007669"/>
    <property type="project" value="UniProtKB-SubCell"/>
</dbReference>
<dbReference type="GO" id="GO:0005524">
    <property type="term" value="F:ATP binding"/>
    <property type="evidence" value="ECO:0007669"/>
    <property type="project" value="UniProtKB-KW"/>
</dbReference>
<dbReference type="GO" id="GO:0016887">
    <property type="term" value="F:ATP hydrolysis activity"/>
    <property type="evidence" value="ECO:0007669"/>
    <property type="project" value="InterPro"/>
</dbReference>
<dbReference type="GO" id="GO:0004386">
    <property type="term" value="F:helicase activity"/>
    <property type="evidence" value="ECO:0007669"/>
    <property type="project" value="UniProtKB-KW"/>
</dbReference>
<dbReference type="GO" id="GO:0006260">
    <property type="term" value="P:DNA replication"/>
    <property type="evidence" value="ECO:0007669"/>
    <property type="project" value="UniProtKB-KW"/>
</dbReference>
<dbReference type="CDD" id="cd18809">
    <property type="entry name" value="SF1_C_RecD"/>
    <property type="match status" value="1"/>
</dbReference>
<dbReference type="Gene3D" id="3.40.50.300">
    <property type="entry name" value="P-loop containing nucleotide triphosphate hydrolases"/>
    <property type="match status" value="1"/>
</dbReference>
<dbReference type="HAMAP" id="MF_04030">
    <property type="entry name" value="HSV_HELI"/>
    <property type="match status" value="1"/>
</dbReference>
<dbReference type="InterPro" id="IPR003593">
    <property type="entry name" value="AAA+_ATPase"/>
</dbReference>
<dbReference type="InterPro" id="IPR003840">
    <property type="entry name" value="DNA_helicase_dom"/>
</dbReference>
<dbReference type="InterPro" id="IPR034711">
    <property type="entry name" value="HSV_HELI"/>
</dbReference>
<dbReference type="InterPro" id="IPR027417">
    <property type="entry name" value="P-loop_NTPase"/>
</dbReference>
<dbReference type="Pfam" id="PF02689">
    <property type="entry name" value="Herpes_Helicase"/>
    <property type="match status" value="1"/>
</dbReference>
<dbReference type="SMART" id="SM00382">
    <property type="entry name" value="AAA"/>
    <property type="match status" value="1"/>
</dbReference>
<dbReference type="SUPFAM" id="SSF52540">
    <property type="entry name" value="P-loop containing nucleoside triphosphate hydrolases"/>
    <property type="match status" value="2"/>
</dbReference>
<reference key="1">
    <citation type="journal article" date="1996" name="J. Virol.">
        <title>Determination and analysis of the complete nucleotide sequence of human herpesvirus.</title>
        <authorList>
            <person name="Nicholas J."/>
        </authorList>
    </citation>
    <scope>NUCLEOTIDE SEQUENCE [LARGE SCALE GENOMIC DNA]</scope>
</reference>
<name>HELI_HHV7J</name>
<proteinExistence type="inferred from homology"/>
<keyword id="KW-0067">ATP-binding</keyword>
<keyword id="KW-0235">DNA replication</keyword>
<keyword id="KW-0347">Helicase</keyword>
<keyword id="KW-1048">Host nucleus</keyword>
<keyword id="KW-0378">Hydrolase</keyword>
<keyword id="KW-0547">Nucleotide-binding</keyword>
<keyword id="KW-1185">Reference proteome</keyword>
<organismHost>
    <name type="scientific">Homo sapiens</name>
    <name type="common">Human</name>
    <dbReference type="NCBI Taxonomy" id="9606"/>
</organismHost>